<evidence type="ECO:0000255" key="1">
    <source>
        <dbReference type="HAMAP-Rule" id="MF_00574"/>
    </source>
</evidence>
<evidence type="ECO:0000305" key="2"/>
<dbReference type="EMBL" id="CP000813">
    <property type="protein sequence ID" value="ABV60795.1"/>
    <property type="molecule type" value="Genomic_DNA"/>
</dbReference>
<dbReference type="RefSeq" id="WP_003216985.1">
    <property type="nucleotide sequence ID" value="NZ_VEIS01000020.1"/>
</dbReference>
<dbReference type="SMR" id="A8F978"/>
<dbReference type="STRING" id="315750.BPUM_0095"/>
<dbReference type="GeneID" id="5619337"/>
<dbReference type="KEGG" id="bpu:BPUM_0095"/>
<dbReference type="eggNOG" id="COG1358">
    <property type="taxonomic scope" value="Bacteria"/>
</dbReference>
<dbReference type="HOGENOM" id="CLU_168063_2_0_9"/>
<dbReference type="OrthoDB" id="2353623at2"/>
<dbReference type="Proteomes" id="UP000001355">
    <property type="component" value="Chromosome"/>
</dbReference>
<dbReference type="GO" id="GO:0003723">
    <property type="term" value="F:RNA binding"/>
    <property type="evidence" value="ECO:0007669"/>
    <property type="project" value="UniProtKB-UniRule"/>
</dbReference>
<dbReference type="Gene3D" id="3.30.1330.30">
    <property type="match status" value="1"/>
</dbReference>
<dbReference type="HAMAP" id="MF_00574">
    <property type="entry name" value="Ribosomal_eL8_Bact"/>
    <property type="match status" value="1"/>
</dbReference>
<dbReference type="InterPro" id="IPR029064">
    <property type="entry name" value="Ribosomal_eL30-like_sf"/>
</dbReference>
<dbReference type="InterPro" id="IPR004038">
    <property type="entry name" value="Ribosomal_eL8/eL30/eS12/Gad45"/>
</dbReference>
<dbReference type="InterPro" id="IPR023460">
    <property type="entry name" value="RNA_bf_YbxF-like"/>
</dbReference>
<dbReference type="NCBIfam" id="NF010125">
    <property type="entry name" value="PRK13602.1"/>
    <property type="match status" value="1"/>
</dbReference>
<dbReference type="Pfam" id="PF01248">
    <property type="entry name" value="Ribosomal_L7Ae"/>
    <property type="match status" value="1"/>
</dbReference>
<dbReference type="PRINTS" id="PR00884">
    <property type="entry name" value="RIBOSOMALHS6"/>
</dbReference>
<dbReference type="SUPFAM" id="SSF55315">
    <property type="entry name" value="L30e-like"/>
    <property type="match status" value="1"/>
</dbReference>
<name>RXL7_BACP2</name>
<feature type="chain" id="PRO_1000061171" description="RNA-binding protein BPUM_0095">
    <location>
        <begin position="1"/>
        <end position="82"/>
    </location>
</feature>
<keyword id="KW-0694">RNA-binding</keyword>
<proteinExistence type="inferred from homology"/>
<gene>
    <name type="ordered locus">BPUM_0095</name>
</gene>
<sequence length="82" mass="8558">MSYDKVSQAQSIIIGTKQTVKALKRDSVKEIVVAKDADPALTASVTKLAQEKGVDILVVDSMKKLGKACGIEVGAAAVAIML</sequence>
<comment type="similarity">
    <text evidence="1">Belongs to the eukaryotic ribosomal protein eL8 family.</text>
</comment>
<protein>
    <recommendedName>
        <fullName evidence="1">RNA-binding protein BPUM_0095</fullName>
    </recommendedName>
    <alternativeName>
        <fullName evidence="2">Putative ribosomal protein L7Ae-like</fullName>
    </alternativeName>
    <alternativeName>
        <fullName evidence="1">Ribosomal protein eL8-like</fullName>
    </alternativeName>
</protein>
<accession>A8F978</accession>
<reference key="1">
    <citation type="journal article" date="2007" name="PLoS ONE">
        <title>Paradoxical DNA repair and peroxide resistance gene conservation in Bacillus pumilus SAFR-032.</title>
        <authorList>
            <person name="Gioia J."/>
            <person name="Yerrapragada S."/>
            <person name="Qin X."/>
            <person name="Jiang H."/>
            <person name="Igboeli O.C."/>
            <person name="Muzny D."/>
            <person name="Dugan-Rocha S."/>
            <person name="Ding Y."/>
            <person name="Hawes A."/>
            <person name="Liu W."/>
            <person name="Perez L."/>
            <person name="Kovar C."/>
            <person name="Dinh H."/>
            <person name="Lee S."/>
            <person name="Nazareth L."/>
            <person name="Blyth P."/>
            <person name="Holder M."/>
            <person name="Buhay C."/>
            <person name="Tirumalai M.R."/>
            <person name="Liu Y."/>
            <person name="Dasgupta I."/>
            <person name="Bokhetache L."/>
            <person name="Fujita M."/>
            <person name="Karouia F."/>
            <person name="Eswara Moorthy P."/>
            <person name="Siefert J."/>
            <person name="Uzman A."/>
            <person name="Buzumbo P."/>
            <person name="Verma A."/>
            <person name="Zwiya H."/>
            <person name="McWilliams B.D."/>
            <person name="Olowu A."/>
            <person name="Clinkenbeard K.D."/>
            <person name="Newcombe D."/>
            <person name="Golebiewski L."/>
            <person name="Petrosino J.F."/>
            <person name="Nicholson W.L."/>
            <person name="Fox G.E."/>
            <person name="Venkateswaran K."/>
            <person name="Highlander S.K."/>
            <person name="Weinstock G.M."/>
        </authorList>
    </citation>
    <scope>NUCLEOTIDE SEQUENCE [LARGE SCALE GENOMIC DNA]</scope>
    <source>
        <strain>SAFR-032</strain>
    </source>
</reference>
<organism>
    <name type="scientific">Bacillus pumilus (strain SAFR-032)</name>
    <dbReference type="NCBI Taxonomy" id="315750"/>
    <lineage>
        <taxon>Bacteria</taxon>
        <taxon>Bacillati</taxon>
        <taxon>Bacillota</taxon>
        <taxon>Bacilli</taxon>
        <taxon>Bacillales</taxon>
        <taxon>Bacillaceae</taxon>
        <taxon>Bacillus</taxon>
    </lineage>
</organism>